<feature type="chain" id="PRO_0000114820" description="Ubiquitin">
    <location>
        <begin position="1" status="less than"/>
        <end position="56"/>
    </location>
</feature>
<feature type="chain" id="PRO_0000396357" description="Ubiquitin">
    <location>
        <begin position="57"/>
        <end position="132"/>
    </location>
</feature>
<feature type="propeptide" id="PRO_0000396358">
    <location>
        <position position="133"/>
    </location>
</feature>
<feature type="domain" description="Ubiquitin-like 1" evidence="2">
    <location>
        <begin position="1"/>
        <end position="56"/>
    </location>
</feature>
<feature type="domain" description="Ubiquitin-like 2" evidence="2">
    <location>
        <begin position="57"/>
        <end position="132"/>
    </location>
</feature>
<feature type="cross-link" description="Glycyl lysine isopeptide (Lys-Gly) (interchain with G-Cter in ubiquitin)" evidence="1">
    <location>
        <position position="104"/>
    </location>
</feature>
<feature type="cross-link" description="Glycyl lysine isopeptide (Gly-Lys) (interchain with K-? in acceptor proteins)" evidence="2">
    <location>
        <position position="132"/>
    </location>
</feature>
<feature type="non-terminal residue">
    <location>
        <position position="1"/>
    </location>
</feature>
<dbReference type="EMBL" id="M61772">
    <property type="protein sequence ID" value="AAA30082.1"/>
    <property type="molecule type" value="mRNA"/>
</dbReference>
<dbReference type="PIR" id="A49768">
    <property type="entry name" value="A49768"/>
</dbReference>
<dbReference type="SMR" id="P23398"/>
<dbReference type="STRING" id="7668.P23398"/>
<dbReference type="eggNOG" id="KOG0001">
    <property type="taxonomic scope" value="Eukaryota"/>
</dbReference>
<dbReference type="HOGENOM" id="CLU_010412_7_0_1"/>
<dbReference type="InParanoid" id="P23398"/>
<dbReference type="Proteomes" id="UP000007110">
    <property type="component" value="Unassembled WGS sequence"/>
</dbReference>
<dbReference type="GO" id="GO:0005737">
    <property type="term" value="C:cytoplasm"/>
    <property type="evidence" value="ECO:0007669"/>
    <property type="project" value="UniProtKB-SubCell"/>
</dbReference>
<dbReference type="GO" id="GO:0005634">
    <property type="term" value="C:nucleus"/>
    <property type="evidence" value="ECO:0007669"/>
    <property type="project" value="UniProtKB-SubCell"/>
</dbReference>
<dbReference type="CDD" id="cd01803">
    <property type="entry name" value="Ubl_ubiquitin"/>
    <property type="match status" value="1"/>
</dbReference>
<dbReference type="FunFam" id="3.10.20.90:FF:000158">
    <property type="entry name" value="Polyubiquitin 5"/>
    <property type="match status" value="1"/>
</dbReference>
<dbReference type="FunFam" id="3.10.20.90:FF:000427">
    <property type="entry name" value="Putative Polyubiquitin-C"/>
    <property type="match status" value="1"/>
</dbReference>
<dbReference type="Gene3D" id="3.10.20.90">
    <property type="entry name" value="Phosphatidylinositol 3-kinase Catalytic Subunit, Chain A, domain 1"/>
    <property type="match status" value="2"/>
</dbReference>
<dbReference type="InterPro" id="IPR000626">
    <property type="entry name" value="Ubiquitin-like_dom"/>
</dbReference>
<dbReference type="InterPro" id="IPR029071">
    <property type="entry name" value="Ubiquitin-like_domsf"/>
</dbReference>
<dbReference type="InterPro" id="IPR019954">
    <property type="entry name" value="Ubiquitin_CS"/>
</dbReference>
<dbReference type="InterPro" id="IPR019956">
    <property type="entry name" value="Ubiquitin_dom"/>
</dbReference>
<dbReference type="InterPro" id="IPR050158">
    <property type="entry name" value="Ubiquitin_ubiquitin-like"/>
</dbReference>
<dbReference type="PANTHER" id="PTHR10666">
    <property type="entry name" value="UBIQUITIN"/>
    <property type="match status" value="1"/>
</dbReference>
<dbReference type="Pfam" id="PF00240">
    <property type="entry name" value="ubiquitin"/>
    <property type="match status" value="2"/>
</dbReference>
<dbReference type="PRINTS" id="PR00348">
    <property type="entry name" value="UBIQUITIN"/>
</dbReference>
<dbReference type="SMART" id="SM00213">
    <property type="entry name" value="UBQ"/>
    <property type="match status" value="2"/>
</dbReference>
<dbReference type="SUPFAM" id="SSF54236">
    <property type="entry name" value="Ubiquitin-like"/>
    <property type="match status" value="2"/>
</dbReference>
<dbReference type="PROSITE" id="PS00299">
    <property type="entry name" value="UBIQUITIN_1"/>
    <property type="match status" value="2"/>
</dbReference>
<dbReference type="PROSITE" id="PS50053">
    <property type="entry name" value="UBIQUITIN_2"/>
    <property type="match status" value="2"/>
</dbReference>
<keyword id="KW-0963">Cytoplasm</keyword>
<keyword id="KW-1017">Isopeptide bond</keyword>
<keyword id="KW-0539">Nucleus</keyword>
<keyword id="KW-1185">Reference proteome</keyword>
<keyword id="KW-0677">Repeat</keyword>
<keyword id="KW-0832">Ubl conjugation</keyword>
<evidence type="ECO:0000250" key="1"/>
<evidence type="ECO:0000255" key="2">
    <source>
        <dbReference type="PROSITE-ProRule" id="PRU00214"/>
    </source>
</evidence>
<evidence type="ECO:0000305" key="3"/>
<protein>
    <recommendedName>
        <fullName>Polyubiquitin</fullName>
    </recommendedName>
    <component>
        <recommendedName>
            <fullName>Ubiquitin</fullName>
        </recommendedName>
    </component>
</protein>
<proteinExistence type="evidence at transcript level"/>
<reference key="1">
    <citation type="journal article" date="1991" name="Dev. Biol.">
        <title>Polyubiquitin RNA characteristics and conditional induction in sea urchin embryos.</title>
        <authorList>
            <person name="Nemer M."/>
            <person name="Rondinelli E."/>
            <person name="Infante D."/>
            <person name="Infante A.A."/>
        </authorList>
    </citation>
    <scope>NUCLEOTIDE SEQUENCE [MRNA]</scope>
    <source>
        <tissue>Blastula</tissue>
    </source>
</reference>
<comment type="function">
    <text evidence="1">Ubiquitin exists either covalently attached to another protein, or free (unanchored). When covalently bound, it is conjugated to target proteins via an isopeptide bond either as a monomer (monoubiquitin), a polymer linked via different Lys residues of the ubiquitin (polyubiquitin chains) or a linear polymer linked via the initiator Met of the ubiquitin (linear polyubiquitin chains). Polyubiquitin chains, when attached to a target protein, have different functions depending on the Lys residue of the ubiquitin that is linked: Lys-6-linked may be involved in DNA repair; Lys-11-linked is involved in ERAD (endoplasmic reticulum-associated degradation) and in cell-cycle regulation; Lys-29-linked is involved in lysosomal degradation; Lys-33-linked is involved in kinase modification; Lys-48-linked is involved in protein degradation via the proteasome; Lys-63-linked is involved in endocytosis, DNA-damage responses as well as in signaling processes leading to activation of the transcription factor NF-kappa-B. Linear polymer chains formed via attachment by the initiator Met lead to cell signaling. Ubiquitin is usually conjugated to Lys residues of target proteins, however, in rare cases, conjugation to Cys or Ser residues has been observed. When polyubiquitin is free (unanchored-polyubiquitin), it also has distinct roles, such as in activation of protein kinases, and in signaling (By similarity).</text>
</comment>
<comment type="subcellular location">
    <subcellularLocation>
        <location evidence="1">Cytoplasm</location>
    </subcellularLocation>
    <subcellularLocation>
        <location evidence="1">Nucleus</location>
    </subcellularLocation>
</comment>
<comment type="miscellaneous">
    <text>For the sake of clarity sequence features are annotated only for the first chain, and are not repeated for each of the following chains.</text>
</comment>
<comment type="similarity">
    <text evidence="3">Belongs to the ubiquitin family.</text>
</comment>
<sequence length="133" mass="14994">DSIENVKAKIQDKEGIPPDQQRLIFAGKQLEDGRTLSDYNIQKESTLHLVLRLRGGMQIFVKTLTGKTITLEVEPSDSIENVKAKIQDKEGIPPDQQRLIFAGKQLEDGRTLSDYNIQKESTLHLVLRLRGGQ</sequence>
<accession>P23398</accession>
<name>UBIQP_STRPU</name>
<organism>
    <name type="scientific">Strongylocentrotus purpuratus</name>
    <name type="common">Purple sea urchin</name>
    <dbReference type="NCBI Taxonomy" id="7668"/>
    <lineage>
        <taxon>Eukaryota</taxon>
        <taxon>Metazoa</taxon>
        <taxon>Echinodermata</taxon>
        <taxon>Eleutherozoa</taxon>
        <taxon>Echinozoa</taxon>
        <taxon>Echinoidea</taxon>
        <taxon>Euechinoidea</taxon>
        <taxon>Echinacea</taxon>
        <taxon>Camarodonta</taxon>
        <taxon>Echinidea</taxon>
        <taxon>Strongylocentrotidae</taxon>
        <taxon>Strongylocentrotus</taxon>
    </lineage>
</organism>